<sequence>MVMTDPIADMLTRIRNANMVRHEKLEVPASKIKKEIAELLKREGFIRDVEYIEDNKQGILRIFLKYGANNERVITGLKRISKPGLRVYAKADEVPRVLNGLGIALVSTSKGVMTDKDARQLQTGGEVVAYVW</sequence>
<feature type="chain" id="PRO_1000140510" description="Small ribosomal subunit protein uS8">
    <location>
        <begin position="1"/>
        <end position="132"/>
    </location>
</feature>
<accession>B7IT33</accession>
<reference key="1">
    <citation type="submission" date="2008-10" db="EMBL/GenBank/DDBJ databases">
        <title>Genome sequence of Bacillus cereus G9842.</title>
        <authorList>
            <person name="Dodson R.J."/>
            <person name="Durkin A.S."/>
            <person name="Rosovitz M.J."/>
            <person name="Rasko D.A."/>
            <person name="Hoffmaster A."/>
            <person name="Ravel J."/>
            <person name="Sutton G."/>
        </authorList>
    </citation>
    <scope>NUCLEOTIDE SEQUENCE [LARGE SCALE GENOMIC DNA]</scope>
    <source>
        <strain>G9842</strain>
    </source>
</reference>
<comment type="function">
    <text evidence="1">One of the primary rRNA binding proteins, it binds directly to 16S rRNA central domain where it helps coordinate assembly of the platform of the 30S subunit.</text>
</comment>
<comment type="subunit">
    <text evidence="1">Part of the 30S ribosomal subunit. Contacts proteins S5 and S12.</text>
</comment>
<comment type="similarity">
    <text evidence="1">Belongs to the universal ribosomal protein uS8 family.</text>
</comment>
<name>RS8_BACC2</name>
<proteinExistence type="inferred from homology"/>
<gene>
    <name evidence="1" type="primary">rpsH</name>
    <name type="ordered locus">BCG9842_B5181</name>
</gene>
<protein>
    <recommendedName>
        <fullName evidence="1">Small ribosomal subunit protein uS8</fullName>
    </recommendedName>
    <alternativeName>
        <fullName evidence="2">30S ribosomal protein S8</fullName>
    </alternativeName>
</protein>
<organism>
    <name type="scientific">Bacillus cereus (strain G9842)</name>
    <dbReference type="NCBI Taxonomy" id="405531"/>
    <lineage>
        <taxon>Bacteria</taxon>
        <taxon>Bacillati</taxon>
        <taxon>Bacillota</taxon>
        <taxon>Bacilli</taxon>
        <taxon>Bacillales</taxon>
        <taxon>Bacillaceae</taxon>
        <taxon>Bacillus</taxon>
        <taxon>Bacillus cereus group</taxon>
    </lineage>
</organism>
<keyword id="KW-0687">Ribonucleoprotein</keyword>
<keyword id="KW-0689">Ribosomal protein</keyword>
<keyword id="KW-0694">RNA-binding</keyword>
<keyword id="KW-0699">rRNA-binding</keyword>
<evidence type="ECO:0000255" key="1">
    <source>
        <dbReference type="HAMAP-Rule" id="MF_01302"/>
    </source>
</evidence>
<evidence type="ECO:0000305" key="2"/>
<dbReference type="EMBL" id="CP001186">
    <property type="protein sequence ID" value="ACK96431.1"/>
    <property type="molecule type" value="Genomic_DNA"/>
</dbReference>
<dbReference type="RefSeq" id="WP_000245511.1">
    <property type="nucleotide sequence ID" value="NC_011772.1"/>
</dbReference>
<dbReference type="SMR" id="B7IT33"/>
<dbReference type="GeneID" id="93010929"/>
<dbReference type="KEGG" id="bcg:BCG9842_B5181"/>
<dbReference type="HOGENOM" id="CLU_098428_0_2_9"/>
<dbReference type="Proteomes" id="UP000006744">
    <property type="component" value="Chromosome"/>
</dbReference>
<dbReference type="GO" id="GO:1990904">
    <property type="term" value="C:ribonucleoprotein complex"/>
    <property type="evidence" value="ECO:0007669"/>
    <property type="project" value="UniProtKB-KW"/>
</dbReference>
<dbReference type="GO" id="GO:0005840">
    <property type="term" value="C:ribosome"/>
    <property type="evidence" value="ECO:0007669"/>
    <property type="project" value="UniProtKB-KW"/>
</dbReference>
<dbReference type="GO" id="GO:0019843">
    <property type="term" value="F:rRNA binding"/>
    <property type="evidence" value="ECO:0007669"/>
    <property type="project" value="UniProtKB-UniRule"/>
</dbReference>
<dbReference type="GO" id="GO:0003735">
    <property type="term" value="F:structural constituent of ribosome"/>
    <property type="evidence" value="ECO:0007669"/>
    <property type="project" value="InterPro"/>
</dbReference>
<dbReference type="GO" id="GO:0006412">
    <property type="term" value="P:translation"/>
    <property type="evidence" value="ECO:0007669"/>
    <property type="project" value="UniProtKB-UniRule"/>
</dbReference>
<dbReference type="FunFam" id="3.30.1370.30:FF:000002">
    <property type="entry name" value="30S ribosomal protein S8"/>
    <property type="match status" value="1"/>
</dbReference>
<dbReference type="FunFam" id="3.30.1490.10:FF:000001">
    <property type="entry name" value="30S ribosomal protein S8"/>
    <property type="match status" value="1"/>
</dbReference>
<dbReference type="Gene3D" id="3.30.1370.30">
    <property type="match status" value="1"/>
</dbReference>
<dbReference type="Gene3D" id="3.30.1490.10">
    <property type="match status" value="1"/>
</dbReference>
<dbReference type="HAMAP" id="MF_01302_B">
    <property type="entry name" value="Ribosomal_uS8_B"/>
    <property type="match status" value="1"/>
</dbReference>
<dbReference type="InterPro" id="IPR000630">
    <property type="entry name" value="Ribosomal_uS8"/>
</dbReference>
<dbReference type="InterPro" id="IPR047863">
    <property type="entry name" value="Ribosomal_uS8_CS"/>
</dbReference>
<dbReference type="InterPro" id="IPR035987">
    <property type="entry name" value="Ribosomal_uS8_sf"/>
</dbReference>
<dbReference type="NCBIfam" id="NF001109">
    <property type="entry name" value="PRK00136.1"/>
    <property type="match status" value="1"/>
</dbReference>
<dbReference type="PANTHER" id="PTHR11758">
    <property type="entry name" value="40S RIBOSOMAL PROTEIN S15A"/>
    <property type="match status" value="1"/>
</dbReference>
<dbReference type="Pfam" id="PF00410">
    <property type="entry name" value="Ribosomal_S8"/>
    <property type="match status" value="1"/>
</dbReference>
<dbReference type="SUPFAM" id="SSF56047">
    <property type="entry name" value="Ribosomal protein S8"/>
    <property type="match status" value="1"/>
</dbReference>
<dbReference type="PROSITE" id="PS00053">
    <property type="entry name" value="RIBOSOMAL_S8"/>
    <property type="match status" value="1"/>
</dbReference>